<comment type="function">
    <text evidence="1">Sigma factors are initiation factors that promote the attachment of RNA polymerase to specific initiation sites and are then released. This sigma factor is the primary sigma factor during exponential growth.</text>
</comment>
<comment type="subunit">
    <text evidence="1">Interacts transiently with the RNA polymerase catalytic core.</text>
</comment>
<comment type="subcellular location">
    <subcellularLocation>
        <location evidence="1">Cytoplasm</location>
    </subcellularLocation>
</comment>
<comment type="similarity">
    <text evidence="1">Belongs to the sigma-70 factor family. RpoD/SigA subfamily.</text>
</comment>
<feature type="chain" id="PRO_0000093915" description="RNA polymerase sigma factor SigA">
    <location>
        <begin position="1"/>
        <end position="368"/>
    </location>
</feature>
<feature type="DNA-binding region" description="H-T-H motif" evidence="1">
    <location>
        <begin position="329"/>
        <end position="348"/>
    </location>
</feature>
<feature type="region of interest" description="Disordered" evidence="2">
    <location>
        <begin position="69"/>
        <end position="90"/>
    </location>
</feature>
<feature type="region of interest" description="Sigma-70 factor domain-2" evidence="1">
    <location>
        <begin position="135"/>
        <end position="205"/>
    </location>
</feature>
<feature type="region of interest" description="Sigma-70 factor domain-3" evidence="1">
    <location>
        <begin position="214"/>
        <end position="290"/>
    </location>
</feature>
<feature type="region of interest" description="Sigma-70 factor domain-4" evidence="1">
    <location>
        <begin position="303"/>
        <end position="356"/>
    </location>
</feature>
<feature type="short sequence motif" description="Interaction with polymerase core subunit RpoC">
    <location>
        <begin position="159"/>
        <end position="162"/>
    </location>
</feature>
<feature type="compositionally biased region" description="Basic and acidic residues" evidence="2">
    <location>
        <begin position="71"/>
        <end position="83"/>
    </location>
</feature>
<keyword id="KW-0963">Cytoplasm</keyword>
<keyword id="KW-0238">DNA-binding</keyword>
<keyword id="KW-0731">Sigma factor</keyword>
<keyword id="KW-0804">Transcription</keyword>
<keyword id="KW-0805">Transcription regulation</keyword>
<name>SIGA_STAAM</name>
<proteinExistence type="inferred from homology"/>
<dbReference type="EMBL" id="BA000017">
    <property type="protein sequence ID" value="BAB57723.1"/>
    <property type="molecule type" value="Genomic_DNA"/>
</dbReference>
<dbReference type="RefSeq" id="WP_001283055.1">
    <property type="nucleotide sequence ID" value="NC_002758.2"/>
</dbReference>
<dbReference type="SMR" id="P0A0I8"/>
<dbReference type="GeneID" id="98345932"/>
<dbReference type="KEGG" id="sav:SAV1561"/>
<dbReference type="HOGENOM" id="CLU_014793_3_3_9"/>
<dbReference type="PhylomeDB" id="P0A0I8"/>
<dbReference type="Proteomes" id="UP000002481">
    <property type="component" value="Chromosome"/>
</dbReference>
<dbReference type="GO" id="GO:0005737">
    <property type="term" value="C:cytoplasm"/>
    <property type="evidence" value="ECO:0007669"/>
    <property type="project" value="UniProtKB-SubCell"/>
</dbReference>
<dbReference type="GO" id="GO:0003677">
    <property type="term" value="F:DNA binding"/>
    <property type="evidence" value="ECO:0007669"/>
    <property type="project" value="UniProtKB-UniRule"/>
</dbReference>
<dbReference type="GO" id="GO:0016987">
    <property type="term" value="F:sigma factor activity"/>
    <property type="evidence" value="ECO:0007669"/>
    <property type="project" value="UniProtKB-UniRule"/>
</dbReference>
<dbReference type="GO" id="GO:0006352">
    <property type="term" value="P:DNA-templated transcription initiation"/>
    <property type="evidence" value="ECO:0007669"/>
    <property type="project" value="UniProtKB-UniRule"/>
</dbReference>
<dbReference type="CDD" id="cd06171">
    <property type="entry name" value="Sigma70_r4"/>
    <property type="match status" value="1"/>
</dbReference>
<dbReference type="FunFam" id="1.10.10.10:FF:000002">
    <property type="entry name" value="RNA polymerase sigma factor SigA"/>
    <property type="match status" value="1"/>
</dbReference>
<dbReference type="FunFam" id="1.10.10.10:FF:000004">
    <property type="entry name" value="RNA polymerase sigma factor SigA"/>
    <property type="match status" value="1"/>
</dbReference>
<dbReference type="FunFam" id="1.10.601.10:FF:000001">
    <property type="entry name" value="RNA polymerase sigma factor SigA"/>
    <property type="match status" value="1"/>
</dbReference>
<dbReference type="Gene3D" id="1.10.601.10">
    <property type="entry name" value="RNA Polymerase Primary Sigma Factor"/>
    <property type="match status" value="2"/>
</dbReference>
<dbReference type="Gene3D" id="1.10.220.120">
    <property type="entry name" value="Sigma-70 factor, region 1.1"/>
    <property type="match status" value="1"/>
</dbReference>
<dbReference type="Gene3D" id="1.10.10.10">
    <property type="entry name" value="Winged helix-like DNA-binding domain superfamily/Winged helix DNA-binding domain"/>
    <property type="match status" value="2"/>
</dbReference>
<dbReference type="HAMAP" id="MF_00963">
    <property type="entry name" value="Sigma70_RpoD_SigA"/>
    <property type="match status" value="1"/>
</dbReference>
<dbReference type="InterPro" id="IPR014284">
    <property type="entry name" value="RNA_pol_sigma-70_dom"/>
</dbReference>
<dbReference type="InterPro" id="IPR000943">
    <property type="entry name" value="RNA_pol_sigma70"/>
</dbReference>
<dbReference type="InterPro" id="IPR009042">
    <property type="entry name" value="RNA_pol_sigma70_r1_2"/>
</dbReference>
<dbReference type="InterPro" id="IPR007627">
    <property type="entry name" value="RNA_pol_sigma70_r2"/>
</dbReference>
<dbReference type="InterPro" id="IPR007624">
    <property type="entry name" value="RNA_pol_sigma70_r3"/>
</dbReference>
<dbReference type="InterPro" id="IPR007630">
    <property type="entry name" value="RNA_pol_sigma70_r4"/>
</dbReference>
<dbReference type="InterPro" id="IPR007127">
    <property type="entry name" value="RNA_pol_sigma_70_r1_1"/>
</dbReference>
<dbReference type="InterPro" id="IPR042189">
    <property type="entry name" value="RNA_pol_sigma_70_r1_1_sf"/>
</dbReference>
<dbReference type="InterPro" id="IPR013325">
    <property type="entry name" value="RNA_pol_sigma_r2"/>
</dbReference>
<dbReference type="InterPro" id="IPR013324">
    <property type="entry name" value="RNA_pol_sigma_r3/r4-like"/>
</dbReference>
<dbReference type="InterPro" id="IPR012760">
    <property type="entry name" value="RNA_pol_sigma_RpoD_C"/>
</dbReference>
<dbReference type="InterPro" id="IPR050239">
    <property type="entry name" value="Sigma-70_RNA_pol_init_factors"/>
</dbReference>
<dbReference type="InterPro" id="IPR028630">
    <property type="entry name" value="Sigma70_RpoD"/>
</dbReference>
<dbReference type="InterPro" id="IPR036388">
    <property type="entry name" value="WH-like_DNA-bd_sf"/>
</dbReference>
<dbReference type="NCBIfam" id="NF006666">
    <property type="entry name" value="PRK09210.1"/>
    <property type="match status" value="1"/>
</dbReference>
<dbReference type="NCBIfam" id="TIGR02393">
    <property type="entry name" value="RpoD_Cterm"/>
    <property type="match status" value="1"/>
</dbReference>
<dbReference type="NCBIfam" id="TIGR02937">
    <property type="entry name" value="sigma70-ECF"/>
    <property type="match status" value="1"/>
</dbReference>
<dbReference type="PANTHER" id="PTHR30603">
    <property type="entry name" value="RNA POLYMERASE SIGMA FACTOR RPO"/>
    <property type="match status" value="1"/>
</dbReference>
<dbReference type="PANTHER" id="PTHR30603:SF60">
    <property type="entry name" value="RNA POLYMERASE SIGMA FACTOR RPOD"/>
    <property type="match status" value="1"/>
</dbReference>
<dbReference type="Pfam" id="PF03979">
    <property type="entry name" value="Sigma70_r1_1"/>
    <property type="match status" value="1"/>
</dbReference>
<dbReference type="Pfam" id="PF00140">
    <property type="entry name" value="Sigma70_r1_2"/>
    <property type="match status" value="1"/>
</dbReference>
<dbReference type="Pfam" id="PF04542">
    <property type="entry name" value="Sigma70_r2"/>
    <property type="match status" value="1"/>
</dbReference>
<dbReference type="Pfam" id="PF04539">
    <property type="entry name" value="Sigma70_r3"/>
    <property type="match status" value="1"/>
</dbReference>
<dbReference type="Pfam" id="PF04545">
    <property type="entry name" value="Sigma70_r4"/>
    <property type="match status" value="1"/>
</dbReference>
<dbReference type="PRINTS" id="PR00046">
    <property type="entry name" value="SIGMA70FCT"/>
</dbReference>
<dbReference type="SUPFAM" id="SSF88946">
    <property type="entry name" value="Sigma2 domain of RNA polymerase sigma factors"/>
    <property type="match status" value="1"/>
</dbReference>
<dbReference type="SUPFAM" id="SSF88659">
    <property type="entry name" value="Sigma3 and sigma4 domains of RNA polymerase sigma factors"/>
    <property type="match status" value="2"/>
</dbReference>
<dbReference type="PROSITE" id="PS00715">
    <property type="entry name" value="SIGMA70_1"/>
    <property type="match status" value="1"/>
</dbReference>
<dbReference type="PROSITE" id="PS00716">
    <property type="entry name" value="SIGMA70_2"/>
    <property type="match status" value="1"/>
</dbReference>
<evidence type="ECO:0000255" key="1">
    <source>
        <dbReference type="HAMAP-Rule" id="MF_00963"/>
    </source>
</evidence>
<evidence type="ECO:0000256" key="2">
    <source>
        <dbReference type="SAM" id="MobiDB-lite"/>
    </source>
</evidence>
<organism>
    <name type="scientific">Staphylococcus aureus (strain Mu50 / ATCC 700699)</name>
    <dbReference type="NCBI Taxonomy" id="158878"/>
    <lineage>
        <taxon>Bacteria</taxon>
        <taxon>Bacillati</taxon>
        <taxon>Bacillota</taxon>
        <taxon>Bacilli</taxon>
        <taxon>Bacillales</taxon>
        <taxon>Staphylococcaceae</taxon>
        <taxon>Staphylococcus</taxon>
    </lineage>
</organism>
<sequence length="368" mass="42171">MSDNTVKIKKQTIDPTLTLEDVKKQLIEKGKKEGHLSHEEIAEKLQNFDIDSDQMDDFFDQLNDNDISLVNEKDSSDTDEKLNPSDLSAPPGVKINDPVRMYLKEIGRVNLLSAQEEIELAKRIEQGDEVAKSRLAEANLRLVVSIAKRYVGRGMLFLDLIQEGNMGLIKAVEKFDFNKGFKFSTYATWWIRQAITRAIADQARTIRIPVHMVETINKLIRVQRQLLQDLGRDPAPEEIGEEMDLPAEKVREILKIAQEPVSLETPIGEEDDSHLGDFIEDQEAQSPSDHAAYELLKEQLEDVLDTLTDREENVLRLRFGLDDGRTRTLEEVGKVFGVTRERIRQIEAKALRKLRHPSRSKRLKDFMD</sequence>
<gene>
    <name evidence="1" type="primary">sigA</name>
    <name type="synonym">plaC</name>
    <name type="synonym">rpoD</name>
    <name type="ordered locus">SAV1561</name>
</gene>
<accession>P0A0I8</accession>
<accession>P26766</accession>
<protein>
    <recommendedName>
        <fullName evidence="1">RNA polymerase sigma factor SigA</fullName>
    </recommendedName>
</protein>
<reference key="1">
    <citation type="journal article" date="2001" name="Lancet">
        <title>Whole genome sequencing of meticillin-resistant Staphylococcus aureus.</title>
        <authorList>
            <person name="Kuroda M."/>
            <person name="Ohta T."/>
            <person name="Uchiyama I."/>
            <person name="Baba T."/>
            <person name="Yuzawa H."/>
            <person name="Kobayashi I."/>
            <person name="Cui L."/>
            <person name="Oguchi A."/>
            <person name="Aoki K."/>
            <person name="Nagai Y."/>
            <person name="Lian J.-Q."/>
            <person name="Ito T."/>
            <person name="Kanamori M."/>
            <person name="Matsumaru H."/>
            <person name="Maruyama A."/>
            <person name="Murakami H."/>
            <person name="Hosoyama A."/>
            <person name="Mizutani-Ui Y."/>
            <person name="Takahashi N.K."/>
            <person name="Sawano T."/>
            <person name="Inoue R."/>
            <person name="Kaito C."/>
            <person name="Sekimizu K."/>
            <person name="Hirakawa H."/>
            <person name="Kuhara S."/>
            <person name="Goto S."/>
            <person name="Yabuzaki J."/>
            <person name="Kanehisa M."/>
            <person name="Yamashita A."/>
            <person name="Oshima K."/>
            <person name="Furuya K."/>
            <person name="Yoshino C."/>
            <person name="Shiba T."/>
            <person name="Hattori M."/>
            <person name="Ogasawara N."/>
            <person name="Hayashi H."/>
            <person name="Hiramatsu K."/>
        </authorList>
    </citation>
    <scope>NUCLEOTIDE SEQUENCE [LARGE SCALE GENOMIC DNA]</scope>
    <source>
        <strain>Mu50 / ATCC 700699</strain>
    </source>
</reference>